<proteinExistence type="inferred from homology"/>
<comment type="function">
    <text evidence="1">An aminoacyl-tRNA editing enzyme that deacylates mischarged D-aminoacyl-tRNAs. Also deacylates mischarged glycyl-tRNA(Ala), protecting cells against glycine mischarging by AlaRS. Acts via tRNA-based rather than protein-based catalysis; rejects L-amino acids rather than detecting D-amino acids in the active site. By recycling D-aminoacyl-tRNA to D-amino acids and free tRNA molecules, this enzyme counteracts the toxicity associated with the formation of D-aminoacyl-tRNA entities in vivo and helps enforce protein L-homochirality.</text>
</comment>
<comment type="catalytic activity">
    <reaction evidence="1">
        <text>glycyl-tRNA(Ala) + H2O = tRNA(Ala) + glycine + H(+)</text>
        <dbReference type="Rhea" id="RHEA:53744"/>
        <dbReference type="Rhea" id="RHEA-COMP:9657"/>
        <dbReference type="Rhea" id="RHEA-COMP:13640"/>
        <dbReference type="ChEBI" id="CHEBI:15377"/>
        <dbReference type="ChEBI" id="CHEBI:15378"/>
        <dbReference type="ChEBI" id="CHEBI:57305"/>
        <dbReference type="ChEBI" id="CHEBI:78442"/>
        <dbReference type="ChEBI" id="CHEBI:78522"/>
        <dbReference type="EC" id="3.1.1.96"/>
    </reaction>
</comment>
<comment type="catalytic activity">
    <reaction evidence="1">
        <text>a D-aminoacyl-tRNA + H2O = a tRNA + a D-alpha-amino acid + H(+)</text>
        <dbReference type="Rhea" id="RHEA:13953"/>
        <dbReference type="Rhea" id="RHEA-COMP:10123"/>
        <dbReference type="Rhea" id="RHEA-COMP:10124"/>
        <dbReference type="ChEBI" id="CHEBI:15377"/>
        <dbReference type="ChEBI" id="CHEBI:15378"/>
        <dbReference type="ChEBI" id="CHEBI:59871"/>
        <dbReference type="ChEBI" id="CHEBI:78442"/>
        <dbReference type="ChEBI" id="CHEBI:79333"/>
        <dbReference type="EC" id="3.1.1.96"/>
    </reaction>
</comment>
<comment type="subunit">
    <text evidence="1">Homodimer.</text>
</comment>
<comment type="subcellular location">
    <subcellularLocation>
        <location evidence="1">Cytoplasm</location>
    </subcellularLocation>
</comment>
<comment type="domain">
    <text evidence="1">A Gly-cisPro motif from one monomer fits into the active site of the other monomer to allow specific chiral rejection of L-amino acids.</text>
</comment>
<comment type="similarity">
    <text evidence="1">Belongs to the DTD family.</text>
</comment>
<keyword id="KW-0963">Cytoplasm</keyword>
<keyword id="KW-0378">Hydrolase</keyword>
<keyword id="KW-0694">RNA-binding</keyword>
<keyword id="KW-0820">tRNA-binding</keyword>
<evidence type="ECO:0000255" key="1">
    <source>
        <dbReference type="HAMAP-Rule" id="MF_00518"/>
    </source>
</evidence>
<sequence length="149" mass="16373">MRVVIQRVSKASVTIEENVVGKVGPGFMLLVAFNDEDTDADLDFAVRKIVNMRIFEDEQAKMNLSINDVKGAILSVSQFTLFASTKKGNRPSFTKSGNPELASKLYDQFNAKLRATGIEVQTGQFGADMQVELVNDGPVTIVLDTQNKE</sequence>
<gene>
    <name evidence="1" type="primary">dtd</name>
    <name type="ordered locus">PEPE_1119</name>
</gene>
<feature type="chain" id="PRO_1000050865" description="D-aminoacyl-tRNA deacylase">
    <location>
        <begin position="1"/>
        <end position="149"/>
    </location>
</feature>
<feature type="short sequence motif" description="Gly-cisPro motif, important for rejection of L-amino acids" evidence="1">
    <location>
        <begin position="137"/>
        <end position="138"/>
    </location>
</feature>
<organism>
    <name type="scientific">Pediococcus pentosaceus (strain ATCC 25745 / CCUG 21536 / LMG 10740 / 183-1w)</name>
    <dbReference type="NCBI Taxonomy" id="278197"/>
    <lineage>
        <taxon>Bacteria</taxon>
        <taxon>Bacillati</taxon>
        <taxon>Bacillota</taxon>
        <taxon>Bacilli</taxon>
        <taxon>Lactobacillales</taxon>
        <taxon>Lactobacillaceae</taxon>
        <taxon>Pediococcus</taxon>
    </lineage>
</organism>
<dbReference type="EC" id="3.1.1.96" evidence="1"/>
<dbReference type="EMBL" id="CP000422">
    <property type="protein sequence ID" value="ABJ68174.1"/>
    <property type="molecule type" value="Genomic_DNA"/>
</dbReference>
<dbReference type="RefSeq" id="WP_011673503.1">
    <property type="nucleotide sequence ID" value="NC_008525.1"/>
</dbReference>
<dbReference type="SMR" id="Q03F48"/>
<dbReference type="STRING" id="278197.PEPE_1119"/>
<dbReference type="GeneID" id="33062604"/>
<dbReference type="KEGG" id="ppe:PEPE_1119"/>
<dbReference type="eggNOG" id="COG1490">
    <property type="taxonomic scope" value="Bacteria"/>
</dbReference>
<dbReference type="HOGENOM" id="CLU_076901_1_0_9"/>
<dbReference type="OrthoDB" id="9801395at2"/>
<dbReference type="Proteomes" id="UP000000773">
    <property type="component" value="Chromosome"/>
</dbReference>
<dbReference type="GO" id="GO:0005737">
    <property type="term" value="C:cytoplasm"/>
    <property type="evidence" value="ECO:0007669"/>
    <property type="project" value="UniProtKB-SubCell"/>
</dbReference>
<dbReference type="GO" id="GO:0051500">
    <property type="term" value="F:D-tyrosyl-tRNA(Tyr) deacylase activity"/>
    <property type="evidence" value="ECO:0007669"/>
    <property type="project" value="TreeGrafter"/>
</dbReference>
<dbReference type="GO" id="GO:0106026">
    <property type="term" value="F:Gly-tRNA(Ala) deacylase activity"/>
    <property type="evidence" value="ECO:0007669"/>
    <property type="project" value="UniProtKB-UniRule"/>
</dbReference>
<dbReference type="GO" id="GO:0043908">
    <property type="term" value="F:Ser(Gly)-tRNA(Ala) hydrolase activity"/>
    <property type="evidence" value="ECO:0007669"/>
    <property type="project" value="UniProtKB-UniRule"/>
</dbReference>
<dbReference type="GO" id="GO:0000049">
    <property type="term" value="F:tRNA binding"/>
    <property type="evidence" value="ECO:0007669"/>
    <property type="project" value="UniProtKB-UniRule"/>
</dbReference>
<dbReference type="GO" id="GO:0019478">
    <property type="term" value="P:D-amino acid catabolic process"/>
    <property type="evidence" value="ECO:0007669"/>
    <property type="project" value="UniProtKB-UniRule"/>
</dbReference>
<dbReference type="CDD" id="cd00563">
    <property type="entry name" value="Dtyr_deacylase"/>
    <property type="match status" value="1"/>
</dbReference>
<dbReference type="FunFam" id="3.50.80.10:FF:000001">
    <property type="entry name" value="D-aminoacyl-tRNA deacylase"/>
    <property type="match status" value="1"/>
</dbReference>
<dbReference type="Gene3D" id="3.50.80.10">
    <property type="entry name" value="D-tyrosyl-tRNA(Tyr) deacylase"/>
    <property type="match status" value="1"/>
</dbReference>
<dbReference type="HAMAP" id="MF_00518">
    <property type="entry name" value="Deacylase_Dtd"/>
    <property type="match status" value="1"/>
</dbReference>
<dbReference type="InterPro" id="IPR003732">
    <property type="entry name" value="Daa-tRNA_deacyls_DTD"/>
</dbReference>
<dbReference type="InterPro" id="IPR023509">
    <property type="entry name" value="DTD-like_sf"/>
</dbReference>
<dbReference type="NCBIfam" id="TIGR00256">
    <property type="entry name" value="D-aminoacyl-tRNA deacylase"/>
    <property type="match status" value="1"/>
</dbReference>
<dbReference type="PANTHER" id="PTHR10472:SF5">
    <property type="entry name" value="D-AMINOACYL-TRNA DEACYLASE 1"/>
    <property type="match status" value="1"/>
</dbReference>
<dbReference type="PANTHER" id="PTHR10472">
    <property type="entry name" value="D-TYROSYL-TRNA TYR DEACYLASE"/>
    <property type="match status" value="1"/>
</dbReference>
<dbReference type="Pfam" id="PF02580">
    <property type="entry name" value="Tyr_Deacylase"/>
    <property type="match status" value="1"/>
</dbReference>
<dbReference type="SUPFAM" id="SSF69500">
    <property type="entry name" value="DTD-like"/>
    <property type="match status" value="1"/>
</dbReference>
<reference key="1">
    <citation type="journal article" date="2006" name="Proc. Natl. Acad. Sci. U.S.A.">
        <title>Comparative genomics of the lactic acid bacteria.</title>
        <authorList>
            <person name="Makarova K.S."/>
            <person name="Slesarev A."/>
            <person name="Wolf Y.I."/>
            <person name="Sorokin A."/>
            <person name="Mirkin B."/>
            <person name="Koonin E.V."/>
            <person name="Pavlov A."/>
            <person name="Pavlova N."/>
            <person name="Karamychev V."/>
            <person name="Polouchine N."/>
            <person name="Shakhova V."/>
            <person name="Grigoriev I."/>
            <person name="Lou Y."/>
            <person name="Rohksar D."/>
            <person name="Lucas S."/>
            <person name="Huang K."/>
            <person name="Goodstein D.M."/>
            <person name="Hawkins T."/>
            <person name="Plengvidhya V."/>
            <person name="Welker D."/>
            <person name="Hughes J."/>
            <person name="Goh Y."/>
            <person name="Benson A."/>
            <person name="Baldwin K."/>
            <person name="Lee J.-H."/>
            <person name="Diaz-Muniz I."/>
            <person name="Dosti B."/>
            <person name="Smeianov V."/>
            <person name="Wechter W."/>
            <person name="Barabote R."/>
            <person name="Lorca G."/>
            <person name="Altermann E."/>
            <person name="Barrangou R."/>
            <person name="Ganesan B."/>
            <person name="Xie Y."/>
            <person name="Rawsthorne H."/>
            <person name="Tamir D."/>
            <person name="Parker C."/>
            <person name="Breidt F."/>
            <person name="Broadbent J.R."/>
            <person name="Hutkins R."/>
            <person name="O'Sullivan D."/>
            <person name="Steele J."/>
            <person name="Unlu G."/>
            <person name="Saier M.H. Jr."/>
            <person name="Klaenhammer T."/>
            <person name="Richardson P."/>
            <person name="Kozyavkin S."/>
            <person name="Weimer B.C."/>
            <person name="Mills D.A."/>
        </authorList>
    </citation>
    <scope>NUCLEOTIDE SEQUENCE [LARGE SCALE GENOMIC DNA]</scope>
    <source>
        <strain>ATCC 25745 / CCUG 21536 / LMG 10740 / 183-1w</strain>
    </source>
</reference>
<name>DTD_PEDPA</name>
<protein>
    <recommendedName>
        <fullName evidence="1">D-aminoacyl-tRNA deacylase</fullName>
        <shortName evidence="1">DTD</shortName>
        <ecNumber evidence="1">3.1.1.96</ecNumber>
    </recommendedName>
    <alternativeName>
        <fullName evidence="1">Gly-tRNA(Ala) deacylase</fullName>
    </alternativeName>
</protein>
<accession>Q03F48</accession>